<keyword id="KW-0456">Lyase</keyword>
<keyword id="KW-0460">Magnesium</keyword>
<keyword id="KW-0479">Metal-binding</keyword>
<keyword id="KW-1185">Reference proteome</keyword>
<protein>
    <recommendedName>
        <fullName>Methylaspartate ammonia-lyase</fullName>
        <shortName>MAL</shortName>
        <ecNumber>4.3.1.2</ecNumber>
    </recommendedName>
    <alternativeName>
        <fullName>3-methylaspartate ammonia-lyase</fullName>
    </alternativeName>
    <alternativeName>
        <fullName>Beta-methylaspartase</fullName>
    </alternativeName>
</protein>
<proteinExistence type="inferred from homology"/>
<feature type="chain" id="PRO_0000429368" description="Methylaspartate ammonia-lyase">
    <location>
        <begin position="1"/>
        <end position="422"/>
    </location>
</feature>
<feature type="active site" description="Proton acceptor" evidence="1">
    <location>
        <position position="334"/>
    </location>
</feature>
<feature type="binding site" evidence="1">
    <location>
        <position position="175"/>
    </location>
    <ligand>
        <name>(2S,3S)-3-methyl-L-aspartate</name>
        <dbReference type="ChEBI" id="CHEBI:58724"/>
    </ligand>
</feature>
<feature type="binding site" evidence="1">
    <location>
        <position position="239"/>
    </location>
    <ligand>
        <name>Mg(2+)</name>
        <dbReference type="ChEBI" id="CHEBI:18420"/>
    </ligand>
</feature>
<feature type="binding site" evidence="1">
    <location>
        <position position="276"/>
    </location>
    <ligand>
        <name>Mg(2+)</name>
        <dbReference type="ChEBI" id="CHEBI:18420"/>
    </ligand>
</feature>
<feature type="binding site" evidence="1">
    <location>
        <position position="310"/>
    </location>
    <ligand>
        <name>Mg(2+)</name>
        <dbReference type="ChEBI" id="CHEBI:18420"/>
    </ligand>
</feature>
<feature type="binding site" evidence="1">
    <location>
        <position position="332"/>
    </location>
    <ligand>
        <name>(2S,3S)-3-methyl-L-aspartate</name>
        <dbReference type="ChEBI" id="CHEBI:58724"/>
    </ligand>
</feature>
<feature type="binding site" evidence="1">
    <location>
        <begin position="363"/>
        <end position="364"/>
    </location>
    <ligand>
        <name>(2S,3S)-3-methyl-L-aspartate</name>
        <dbReference type="ChEBI" id="CHEBI:58724"/>
    </ligand>
</feature>
<feature type="site" description="Transition state stabilizer" evidence="1">
    <location>
        <position position="197"/>
    </location>
</feature>
<comment type="function">
    <text evidence="3">Involved in the methylaspartate cycle. Catalyzes the formation of the alpha,beta-unsaturated bond by the reversible anti elimination of ammonia from L-threo-beta-methylaspartate (L-threo-(2S,3S)-3-methylaspartate) to give mesaconate (Probable).</text>
</comment>
<comment type="catalytic activity">
    <reaction>
        <text>(2S,3S)-3-methyl-L-aspartate = mesaconate + NH4(+)</text>
        <dbReference type="Rhea" id="RHEA:12829"/>
        <dbReference type="ChEBI" id="CHEBI:28938"/>
        <dbReference type="ChEBI" id="CHEBI:36986"/>
        <dbReference type="ChEBI" id="CHEBI:58724"/>
        <dbReference type="EC" id="4.3.1.2"/>
    </reaction>
</comment>
<comment type="cofactor">
    <cofactor evidence="1">
        <name>Mg(2+)</name>
        <dbReference type="ChEBI" id="CHEBI:18420"/>
    </cofactor>
</comment>
<comment type="pathway">
    <text>Amino-acid degradation; L-glutamate degradation via mesaconate pathway; acetate and pyruvate from L-glutamate: step 2/4.</text>
</comment>
<comment type="subunit">
    <text evidence="1">Homodimer.</text>
</comment>
<comment type="similarity">
    <text evidence="2">Belongs to the methylaspartate ammonia-lyase family.</text>
</comment>
<comment type="sequence caution" evidence="2">
    <conflict type="erroneous initiation">
        <sequence resource="EMBL-CDS" id="AAV45687"/>
    </conflict>
    <text>Extended N-terminus.</text>
</comment>
<dbReference type="EC" id="4.3.1.2"/>
<dbReference type="EMBL" id="AY596297">
    <property type="protein sequence ID" value="AAV45687.1"/>
    <property type="status" value="ALT_INIT"/>
    <property type="molecule type" value="Genomic_DNA"/>
</dbReference>
<dbReference type="RefSeq" id="WP_049938817.1">
    <property type="nucleotide sequence ID" value="NC_006396.1"/>
</dbReference>
<dbReference type="SMR" id="Q5V465"/>
<dbReference type="STRING" id="272569.rrnAC0687"/>
<dbReference type="PaxDb" id="272569-rrnAC0687"/>
<dbReference type="EnsemblBacteria" id="AAV45687">
    <property type="protein sequence ID" value="AAV45687"/>
    <property type="gene ID" value="rrnAC0687"/>
</dbReference>
<dbReference type="GeneID" id="40151726"/>
<dbReference type="KEGG" id="hma:rrnAC0687"/>
<dbReference type="PATRIC" id="fig|272569.17.peg.1436"/>
<dbReference type="eggNOG" id="arCOG06232">
    <property type="taxonomic scope" value="Archaea"/>
</dbReference>
<dbReference type="HOGENOM" id="CLU_055277_0_0_2"/>
<dbReference type="BioCyc" id="MetaCyc:MONOMER-16255"/>
<dbReference type="UniPathway" id="UPA00561">
    <property type="reaction ID" value="UER00618"/>
</dbReference>
<dbReference type="Proteomes" id="UP000001169">
    <property type="component" value="Chromosome I"/>
</dbReference>
<dbReference type="GO" id="GO:0046872">
    <property type="term" value="F:metal ion binding"/>
    <property type="evidence" value="ECO:0007669"/>
    <property type="project" value="UniProtKB-KW"/>
</dbReference>
<dbReference type="GO" id="GO:0050096">
    <property type="term" value="F:methylaspartate ammonia-lyase activity"/>
    <property type="evidence" value="ECO:0007669"/>
    <property type="project" value="UniProtKB-EC"/>
</dbReference>
<dbReference type="GO" id="GO:0019553">
    <property type="term" value="P:glutamate catabolic process via L-citramalate"/>
    <property type="evidence" value="ECO:0007669"/>
    <property type="project" value="UniProtKB-UniPathway"/>
</dbReference>
<dbReference type="CDD" id="cd03314">
    <property type="entry name" value="MAL"/>
    <property type="match status" value="1"/>
</dbReference>
<dbReference type="Gene3D" id="3.20.20.120">
    <property type="entry name" value="Enolase-like C-terminal domain"/>
    <property type="match status" value="1"/>
</dbReference>
<dbReference type="Gene3D" id="3.30.390.10">
    <property type="entry name" value="Enolase-like, N-terminal domain"/>
    <property type="match status" value="1"/>
</dbReference>
<dbReference type="InterPro" id="IPR036849">
    <property type="entry name" value="Enolase-like_C_sf"/>
</dbReference>
<dbReference type="InterPro" id="IPR029017">
    <property type="entry name" value="Enolase-like_N"/>
</dbReference>
<dbReference type="InterPro" id="IPR006395">
    <property type="entry name" value="Me_Asp_am_lyase"/>
</dbReference>
<dbReference type="InterPro" id="IPR022662">
    <property type="entry name" value="MeAsp_NH4-lyase_C"/>
</dbReference>
<dbReference type="InterPro" id="IPR022665">
    <property type="entry name" value="MeAsp_NH4-lyase_N"/>
</dbReference>
<dbReference type="NCBIfam" id="TIGR01502">
    <property type="entry name" value="B_methylAsp_ase"/>
    <property type="match status" value="1"/>
</dbReference>
<dbReference type="PANTHER" id="PTHR48073:SF2">
    <property type="entry name" value="O-SUCCINYLBENZOATE SYNTHASE"/>
    <property type="match status" value="1"/>
</dbReference>
<dbReference type="PANTHER" id="PTHR48073">
    <property type="entry name" value="O-SUCCINYLBENZOATE SYNTHASE-RELATED"/>
    <property type="match status" value="1"/>
</dbReference>
<dbReference type="Pfam" id="PF07476">
    <property type="entry name" value="MAAL_C"/>
    <property type="match status" value="1"/>
</dbReference>
<dbReference type="Pfam" id="PF05034">
    <property type="entry name" value="MAAL_N"/>
    <property type="match status" value="1"/>
</dbReference>
<dbReference type="PIRSF" id="PIRSF017107">
    <property type="entry name" value="MAL"/>
    <property type="match status" value="1"/>
</dbReference>
<dbReference type="SFLD" id="SFLDF00007">
    <property type="entry name" value="methylaspartate_ammonia-lyase"/>
    <property type="match status" value="1"/>
</dbReference>
<dbReference type="SFLD" id="SFLDG00151">
    <property type="entry name" value="methylaspartate_ammonia-lyase"/>
    <property type="match status" value="1"/>
</dbReference>
<dbReference type="SUPFAM" id="SSF51604">
    <property type="entry name" value="Enolase C-terminal domain-like"/>
    <property type="match status" value="1"/>
</dbReference>
<dbReference type="SUPFAM" id="SSF54826">
    <property type="entry name" value="Enolase N-terminal domain-like"/>
    <property type="match status" value="1"/>
</dbReference>
<evidence type="ECO:0000250" key="1"/>
<evidence type="ECO:0000305" key="2"/>
<evidence type="ECO:0000305" key="3">
    <source>
    </source>
</evidence>
<name>MAAL_HALMA</name>
<reference key="1">
    <citation type="journal article" date="2004" name="Genome Res.">
        <title>Genome sequence of Haloarcula marismortui: a halophilic archaeon from the Dead Sea.</title>
        <authorList>
            <person name="Baliga N.S."/>
            <person name="Bonneau R."/>
            <person name="Facciotti M.T."/>
            <person name="Pan M."/>
            <person name="Glusman G."/>
            <person name="Deutsch E.W."/>
            <person name="Shannon P."/>
            <person name="Chiu Y."/>
            <person name="Weng R.S."/>
            <person name="Gan R.R."/>
            <person name="Hung P."/>
            <person name="Date S.V."/>
            <person name="Marcotte E."/>
            <person name="Hood L."/>
            <person name="Ng W.V."/>
        </authorList>
    </citation>
    <scope>NUCLEOTIDE SEQUENCE [LARGE SCALE GENOMIC DNA]</scope>
    <source>
        <strain>ATCC 43049 / DSM 3752 / JCM 8966 / VKM B-1809</strain>
    </source>
</reference>
<reference key="2">
    <citation type="journal article" date="2011" name="Science">
        <title>A methylaspartate cycle in haloarchaea.</title>
        <authorList>
            <person name="Khomyakova M."/>
            <person name="Bukmez O."/>
            <person name="Thomas L.K."/>
            <person name="Erb T.J."/>
            <person name="Berg I.A."/>
        </authorList>
    </citation>
    <scope>FUNCTION</scope>
    <source>
        <strain>ATCC 43049 / DSM 3752 / JCM 8966 / VKM B-1809</strain>
    </source>
</reference>
<organism>
    <name type="scientific">Haloarcula marismortui (strain ATCC 43049 / DSM 3752 / JCM 8966 / VKM B-1809)</name>
    <name type="common">Halobacterium marismortui</name>
    <dbReference type="NCBI Taxonomy" id="272569"/>
    <lineage>
        <taxon>Archaea</taxon>
        <taxon>Methanobacteriati</taxon>
        <taxon>Methanobacteriota</taxon>
        <taxon>Stenosarchaea group</taxon>
        <taxon>Halobacteria</taxon>
        <taxon>Halobacteriales</taxon>
        <taxon>Haloarculaceae</taxon>
        <taxon>Haloarcula</taxon>
    </lineage>
</organism>
<sequence>MRIEDVRTVPGLSGFFFDDQQAIKDGATQTGFAYDGQPVTDGFDRIREAGEALIVEIELADGSIATGDCAAVQYSGAGGRDPLFRAEKYRPVVEGAVADALRGQDATQFGANATMLEEMSPQRSGGDQLHTAVRYGVSQALLNAAAQARGVTPTDVLADTYDTEPATSPVPVFGQSGDERRINAEKMLIKGVPVLPHGLFNSVEKVGENGEGLRDYLAWLSDRATALGPEPYSPRFHVDVYGILGKVFGPPYDRTEVTDYFETLREAAAPYPLQVEGPMDAGGRQAQITEMAELREGLADAGVDVDIVADEWCNTFEDVQAFVDAEAADLVQIKTPDLGGIQRSAEAVLYCDGTDTRAYVGGTCNETVTSARACAHVALATDAAQVLAKPGMGFDEGFMVVTNEMRRALARRDATQEVPADD</sequence>
<gene>
    <name type="primary">mal</name>
    <name type="ordered locus">rrnAC0687</name>
</gene>
<accession>Q5V465</accession>